<reference key="1">
    <citation type="journal article" date="1990" name="Proc. Natl. Acad. Sci. U.S.A.">
        <title>A genetic locus of enteropathogenic Escherichia coli necessary for the production of attaching and effacing lesions on tissue culture cells.</title>
        <authorList>
            <person name="Jerse A.E."/>
            <person name="Yu J."/>
            <person name="Tall B.D."/>
            <person name="Kaper J.B."/>
        </authorList>
    </citation>
    <scope>NUCLEOTIDE SEQUENCE [GENOMIC DNA]</scope>
    <scope>FUNCTION</scope>
    <scope>SUBCELLULAR LOCATION</scope>
    <source>
        <strain evidence="13">E2348/69 / EPEC</strain>
    </source>
</reference>
<reference key="2">
    <citation type="journal article" date="1998" name="Mol. Microbiol.">
        <title>The complete sequence of the locus of enterocyte effacement (LEE) from enteropathogenic Escherichia coli E2348/69.</title>
        <authorList>
            <person name="Elliott S.J."/>
            <person name="Wainwright L.A."/>
            <person name="McDaniel T.K."/>
            <person name="Jarvis K.G."/>
            <person name="Deng Y.K."/>
            <person name="Lai L.C."/>
            <person name="McNamara B.P."/>
            <person name="Donnenberg M.S."/>
            <person name="Kaper J.B."/>
        </authorList>
    </citation>
    <scope>NUCLEOTIDE SEQUENCE [GENOMIC DNA]</scope>
    <source>
        <strain>E2348/69 / EPEC</strain>
    </source>
</reference>
<reference key="3">
    <citation type="journal article" date="2009" name="J. Bacteriol.">
        <title>Complete genome sequence and comparative genome analysis of enteropathogenic Escherichia coli O127:H6 strain E2348/69.</title>
        <authorList>
            <person name="Iguchi A."/>
            <person name="Thomson N.R."/>
            <person name="Ogura Y."/>
            <person name="Saunders D."/>
            <person name="Ooka T."/>
            <person name="Henderson I.R."/>
            <person name="Harris D."/>
            <person name="Asadulghani M."/>
            <person name="Kurokawa K."/>
            <person name="Dean P."/>
            <person name="Kenny B."/>
            <person name="Quail M.A."/>
            <person name="Thurston S."/>
            <person name="Dougan G."/>
            <person name="Hayashi T."/>
            <person name="Parkhill J."/>
            <person name="Frankel G."/>
        </authorList>
    </citation>
    <scope>NUCLEOTIDE SEQUENCE [LARGE SCALE GENOMIC DNA]</scope>
    <source>
        <strain>E2348/69 / EPEC</strain>
    </source>
</reference>
<reference evidence="18" key="4">
    <citation type="journal article" date="1999" name="Nat. Struct. Biol.">
        <title>Structure of the cell-adhesion fragment of intimin from enteropathogenic Escherichia coli.</title>
        <authorList>
            <person name="Kelly G."/>
            <person name="Prasannan S."/>
            <person name="Daniell S."/>
            <person name="Fleming K."/>
            <person name="Frankel G."/>
            <person name="Dougan G."/>
            <person name="Connerton I."/>
            <person name="Matthews S."/>
        </authorList>
    </citation>
    <scope>STRUCTURE BY NMR OF 660-939</scope>
    <scope>DISULFIDE BOND</scope>
    <source>
        <strain evidence="5">E2348/69 / EPEC</strain>
    </source>
</reference>
<reference evidence="18" key="5">
    <citation type="journal article" date="2000" name="EMBO J.">
        <title>Structural basis for recognition of the translocated intimin receptor (Tir) by intimin from enteropathogenic Escherichia coli.</title>
        <authorList>
            <person name="Batchelor M."/>
            <person name="Prasannan S."/>
            <person name="Daniell S."/>
            <person name="Reece S."/>
            <person name="Connerton I."/>
            <person name="Bloomberg G."/>
            <person name="Dougan G."/>
            <person name="Frankel G."/>
            <person name="Matthews S."/>
        </authorList>
    </citation>
    <scope>STRUCTURE BY NMR OF 753-939</scope>
    <scope>INTERACTION WITH TRANSLOCATED INTIMIN RECEPTOR TIR</scope>
    <scope>FUNCTION</scope>
    <scope>SUBCELLULAR LOCATION</scope>
    <scope>REGION</scope>
    <scope>SITES</scope>
    <scope>DISULFIDE BOND</scope>
    <scope>MUTAGENESIS OF TRP-899</scope>
    <source>
        <strain evidence="11">E2348/69 / EPEC</strain>
    </source>
</reference>
<reference evidence="19 20" key="6">
    <citation type="journal article" date="2000" name="Nature">
        <title>Crystal structure of enteropathogenic Escherichia coli intimin-receptor complex.</title>
        <authorList>
            <person name="Luo Y."/>
            <person name="Frey E.A."/>
            <person name="Pfuetzner R.A."/>
            <person name="Creagh A.L."/>
            <person name="Knoechel D.G."/>
            <person name="Haynes C.A."/>
            <person name="Finlay B.B."/>
            <person name="Strynadka N.C."/>
        </authorList>
    </citation>
    <scope>CRYSTALLOGRAPHY (1.90 ANGSTROMS) OF 658-939 AND IN COMPLEX WITH INTIMIN-BINDING DOMAIN OF TRANSLOCATED INTIMIN RECEPTOR TIR</scope>
    <scope>INTERACTION WITH TIR</scope>
    <scope>REGION</scope>
    <scope>DISULFIDE BOND</scope>
    <source>
        <strain evidence="12">strain E2348/69 / EPEC</strain>
    </source>
</reference>
<reference evidence="21" key="7">
    <citation type="journal article" date="2015" name="Mol. Microbiol.">
        <title>The Intimin periplasmic domain mediates dimerisation and binding to peptidoglycan.</title>
        <authorList>
            <person name="Leo J.C."/>
            <person name="Oberhettinger P."/>
            <person name="Chaubey M."/>
            <person name="Schuetz M."/>
            <person name="Kuehner D."/>
            <person name="Bertsche U."/>
            <person name="Schwarz H."/>
            <person name="Goetz F."/>
            <person name="Autenrieth I.B."/>
            <person name="Coles M."/>
            <person name="Linke D."/>
        </authorList>
    </citation>
    <scope>STRUCTURE BY NMR OF 39-143</scope>
    <scope>FUNCTION</scope>
    <scope>SUBUNIT</scope>
    <scope>REGIONS</scope>
    <source>
        <strain evidence="14">E2348/69 / EPEC</strain>
    </source>
</reference>
<reference evidence="22 23" key="8">
    <citation type="journal article" date="2020" name="Sci. Rep.">
        <title>The extracellular juncture domains in the intimin passenger adopt a constitutively extended conformation inducing restraints to its sphere of action.</title>
        <authorList>
            <person name="Weikum J."/>
            <person name="Kulakova A."/>
            <person name="Tesei G."/>
            <person name="Yoshimoto S."/>
            <person name="Jaegerum L.V."/>
            <person name="Schuetz M."/>
            <person name="Hori K."/>
            <person name="Skepoe M."/>
            <person name="Harris P."/>
            <person name="Leo J.C."/>
            <person name="Morth J.P."/>
        </authorList>
    </citation>
    <scope>X-RAY CRYSTALLOGRAPHY (1.48 ANGSTROMS) OF 450-655 AND 555-753</scope>
    <scope>FUNCTION</scope>
    <scope>SUBCELLULAR LOCATION</scope>
    <scope>DOMAIN</scope>
    <scope>REGIONS</scope>
    <source>
        <strain evidence="15">E2348/69 / EPEC</strain>
    </source>
</reference>
<dbReference type="EMBL" id="M58154">
    <property type="protein sequence ID" value="AAA62775.1"/>
    <property type="molecule type" value="Genomic_DNA"/>
</dbReference>
<dbReference type="EMBL" id="AF022236">
    <property type="protein sequence ID" value="AAC38392.1"/>
    <property type="molecule type" value="Genomic_DNA"/>
</dbReference>
<dbReference type="EMBL" id="FM180568">
    <property type="protein sequence ID" value="CAS11487.1"/>
    <property type="molecule type" value="Genomic_DNA"/>
</dbReference>
<dbReference type="PIR" id="I41197">
    <property type="entry name" value="I41197"/>
</dbReference>
<dbReference type="RefSeq" id="WP_000627890.1">
    <property type="nucleotide sequence ID" value="NC_011601.1"/>
</dbReference>
<dbReference type="PDB" id="1E5U">
    <property type="method" value="NMR"/>
    <property type="chains" value="I=753-939"/>
</dbReference>
<dbReference type="PDB" id="1F00">
    <property type="method" value="X-ray"/>
    <property type="resolution" value="1.90 A"/>
    <property type="chains" value="I=658-939"/>
</dbReference>
<dbReference type="PDB" id="1F02">
    <property type="method" value="X-ray"/>
    <property type="resolution" value="2.90 A"/>
    <property type="chains" value="I=658-939"/>
</dbReference>
<dbReference type="PDB" id="2MPW">
    <property type="method" value="NMR"/>
    <property type="chains" value="A=39-143"/>
</dbReference>
<dbReference type="PDB" id="6TPL">
    <property type="method" value="X-ray"/>
    <property type="resolution" value="1.80 A"/>
    <property type="chains" value="A/B=555-753"/>
</dbReference>
<dbReference type="PDB" id="6TQD">
    <property type="method" value="X-ray"/>
    <property type="resolution" value="1.48 A"/>
    <property type="chains" value="A/B/C/D/E/F=450-655"/>
</dbReference>
<dbReference type="PDBsum" id="1E5U"/>
<dbReference type="PDBsum" id="1F00"/>
<dbReference type="PDBsum" id="1F02"/>
<dbReference type="PDBsum" id="2MPW"/>
<dbReference type="PDBsum" id="6TPL"/>
<dbReference type="PDBsum" id="6TQD"/>
<dbReference type="BMRB" id="P19809"/>
<dbReference type="SASBDB" id="P19809"/>
<dbReference type="SMR" id="P19809"/>
<dbReference type="IntAct" id="P19809">
    <property type="interactions" value="1"/>
</dbReference>
<dbReference type="ABCD" id="P19809">
    <property type="antibodies" value="1 sequenced antibody"/>
</dbReference>
<dbReference type="KEGG" id="ecg:E2348C_3939"/>
<dbReference type="HOGENOM" id="CLU_000210_1_1_6"/>
<dbReference type="EvolutionaryTrace" id="P19809"/>
<dbReference type="Proteomes" id="UP000008205">
    <property type="component" value="Chromosome"/>
</dbReference>
<dbReference type="GO" id="GO:0009279">
    <property type="term" value="C:cell outer membrane"/>
    <property type="evidence" value="ECO:0007669"/>
    <property type="project" value="UniProtKB-SubCell"/>
</dbReference>
<dbReference type="GO" id="GO:0007155">
    <property type="term" value="P:cell adhesion"/>
    <property type="evidence" value="ECO:0007669"/>
    <property type="project" value="InterPro"/>
</dbReference>
<dbReference type="FunFam" id="2.60.40.10:FF:000182">
    <property type="entry name" value="Gamma intimin"/>
    <property type="match status" value="2"/>
</dbReference>
<dbReference type="FunFam" id="2.40.160.160:FF:000001">
    <property type="entry name" value="Intimin-like inverse autotransporter SinH"/>
    <property type="match status" value="1"/>
</dbReference>
<dbReference type="Gene3D" id="2.60.40.1080">
    <property type="match status" value="1"/>
</dbReference>
<dbReference type="Gene3D" id="2.60.40.10">
    <property type="entry name" value="Immunoglobulins"/>
    <property type="match status" value="2"/>
</dbReference>
<dbReference type="Gene3D" id="2.40.160.160">
    <property type="entry name" value="Inverse autotransporter, beta-domain"/>
    <property type="match status" value="1"/>
</dbReference>
<dbReference type="Gene3D" id="3.10.100.10">
    <property type="entry name" value="Mannose-Binding Protein A, subunit A"/>
    <property type="match status" value="1"/>
</dbReference>
<dbReference type="InterPro" id="IPR003344">
    <property type="entry name" value="Big_1_dom"/>
</dbReference>
<dbReference type="InterPro" id="IPR003343">
    <property type="entry name" value="Big_2"/>
</dbReference>
<dbReference type="InterPro" id="IPR016186">
    <property type="entry name" value="C-type_lectin-like/link_sf"/>
</dbReference>
<dbReference type="InterPro" id="IPR016187">
    <property type="entry name" value="CTDL_fold"/>
</dbReference>
<dbReference type="InterPro" id="IPR024519">
    <property type="entry name" value="IAT_beta"/>
</dbReference>
<dbReference type="InterPro" id="IPR038177">
    <property type="entry name" value="IAT_beta_sf"/>
</dbReference>
<dbReference type="InterPro" id="IPR013783">
    <property type="entry name" value="Ig-like_fold"/>
</dbReference>
<dbReference type="InterPro" id="IPR051715">
    <property type="entry name" value="Intimin-Invasin_domain"/>
</dbReference>
<dbReference type="InterPro" id="IPR003535">
    <property type="entry name" value="Intimin/invasin_bac"/>
</dbReference>
<dbReference type="InterPro" id="IPR013117">
    <property type="entry name" value="Intimin_C"/>
</dbReference>
<dbReference type="InterPro" id="IPR008964">
    <property type="entry name" value="Invasin/intimin_cell_adhesion"/>
</dbReference>
<dbReference type="InterPro" id="IPR018392">
    <property type="entry name" value="LysM_dom"/>
</dbReference>
<dbReference type="NCBIfam" id="NF033627">
    <property type="entry name" value="intimin_all"/>
    <property type="match status" value="1"/>
</dbReference>
<dbReference type="NCBIfam" id="NF033639">
    <property type="entry name" value="intimin_alpha"/>
    <property type="match status" value="1"/>
</dbReference>
<dbReference type="PANTHER" id="PTHR39576:SF2">
    <property type="entry name" value="ATTACHING AND EFFACING PROTEIN HOMOLOG-RELATED"/>
    <property type="match status" value="1"/>
</dbReference>
<dbReference type="PANTHER" id="PTHR39576">
    <property type="entry name" value="ATTACHING AND EFFACING PROTEIN HOMOLOG-RELATED-RELATED"/>
    <property type="match status" value="1"/>
</dbReference>
<dbReference type="Pfam" id="PF02369">
    <property type="entry name" value="Big_1"/>
    <property type="match status" value="2"/>
</dbReference>
<dbReference type="Pfam" id="PF11924">
    <property type="entry name" value="IAT_beta"/>
    <property type="match status" value="1"/>
</dbReference>
<dbReference type="Pfam" id="PF07979">
    <property type="entry name" value="Intimin_C"/>
    <property type="match status" value="1"/>
</dbReference>
<dbReference type="Pfam" id="PF01476">
    <property type="entry name" value="LysM"/>
    <property type="match status" value="1"/>
</dbReference>
<dbReference type="PRINTS" id="PR01369">
    <property type="entry name" value="INTIMIN"/>
</dbReference>
<dbReference type="SMART" id="SM00634">
    <property type="entry name" value="BID_1"/>
    <property type="match status" value="2"/>
</dbReference>
<dbReference type="SMART" id="SM00635">
    <property type="entry name" value="BID_2"/>
    <property type="match status" value="1"/>
</dbReference>
<dbReference type="SMART" id="SM00257">
    <property type="entry name" value="LysM"/>
    <property type="match status" value="1"/>
</dbReference>
<dbReference type="SUPFAM" id="SSF56436">
    <property type="entry name" value="C-type lectin-like"/>
    <property type="match status" value="1"/>
</dbReference>
<dbReference type="SUPFAM" id="SSF49373">
    <property type="entry name" value="Invasin/intimin cell-adhesion fragments"/>
    <property type="match status" value="3"/>
</dbReference>
<dbReference type="PROSITE" id="PS51127">
    <property type="entry name" value="BIG1"/>
    <property type="match status" value="2"/>
</dbReference>
<dbReference type="PROSITE" id="PS51782">
    <property type="entry name" value="LYSM"/>
    <property type="match status" value="1"/>
</dbReference>
<accession>P19809</accession>
<accession>B7UM97</accession>
<evidence type="ECO:0000250" key="1">
    <source>
        <dbReference type="UniProtKB" id="P43261"/>
    </source>
</evidence>
<evidence type="ECO:0000255" key="2"/>
<evidence type="ECO:0000255" key="3">
    <source>
        <dbReference type="PROSITE-ProRule" id="PRU00445"/>
    </source>
</evidence>
<evidence type="ECO:0000255" key="4">
    <source>
        <dbReference type="PROSITE-ProRule" id="PRU01118"/>
    </source>
</evidence>
<evidence type="ECO:0000269" key="5">
    <source>
    </source>
</evidence>
<evidence type="ECO:0000269" key="6">
    <source>
    </source>
</evidence>
<evidence type="ECO:0000269" key="7">
    <source>
    </source>
</evidence>
<evidence type="ECO:0000269" key="8">
    <source>
    </source>
</evidence>
<evidence type="ECO:0000269" key="9">
    <source>
    </source>
</evidence>
<evidence type="ECO:0000303" key="10">
    <source>
    </source>
</evidence>
<evidence type="ECO:0000303" key="11">
    <source>
    </source>
</evidence>
<evidence type="ECO:0000303" key="12">
    <source>
    </source>
</evidence>
<evidence type="ECO:0000303" key="13">
    <source>
    </source>
</evidence>
<evidence type="ECO:0000303" key="14">
    <source>
    </source>
</evidence>
<evidence type="ECO:0000303" key="15">
    <source>
    </source>
</evidence>
<evidence type="ECO:0000305" key="16"/>
<evidence type="ECO:0000305" key="17">
    <source>
    </source>
</evidence>
<evidence type="ECO:0007744" key="18">
    <source>
        <dbReference type="PDB" id="1E5U"/>
    </source>
</evidence>
<evidence type="ECO:0007744" key="19">
    <source>
        <dbReference type="PDB" id="1F00"/>
    </source>
</evidence>
<evidence type="ECO:0007744" key="20">
    <source>
        <dbReference type="PDB" id="1F02"/>
    </source>
</evidence>
<evidence type="ECO:0007744" key="21">
    <source>
        <dbReference type="PDB" id="2MPW"/>
    </source>
</evidence>
<evidence type="ECO:0007744" key="22">
    <source>
        <dbReference type="PDB" id="6TPL"/>
    </source>
</evidence>
<evidence type="ECO:0007744" key="23">
    <source>
        <dbReference type="PDB" id="6TQD"/>
    </source>
</evidence>
<evidence type="ECO:0007829" key="24">
    <source>
        <dbReference type="PDB" id="1E5U"/>
    </source>
</evidence>
<evidence type="ECO:0007829" key="25">
    <source>
        <dbReference type="PDB" id="1F00"/>
    </source>
</evidence>
<evidence type="ECO:0007829" key="26">
    <source>
        <dbReference type="PDB" id="1F02"/>
    </source>
</evidence>
<evidence type="ECO:0007829" key="27">
    <source>
        <dbReference type="PDB" id="2MPW"/>
    </source>
</evidence>
<evidence type="ECO:0007829" key="28">
    <source>
        <dbReference type="PDB" id="6TPL"/>
    </source>
</evidence>
<evidence type="ECO:0007829" key="29">
    <source>
        <dbReference type="PDB" id="6TQD"/>
    </source>
</evidence>
<name>EAE_ECO27</name>
<organism>
    <name type="scientific">Escherichia coli O127:H6 (strain E2348/69 / EPEC)</name>
    <dbReference type="NCBI Taxonomy" id="574521"/>
    <lineage>
        <taxon>Bacteria</taxon>
        <taxon>Pseudomonadati</taxon>
        <taxon>Pseudomonadota</taxon>
        <taxon>Gammaproteobacteria</taxon>
        <taxon>Enterobacterales</taxon>
        <taxon>Enterobacteriaceae</taxon>
        <taxon>Escherichia</taxon>
    </lineage>
</organism>
<keyword id="KW-0002">3D-structure</keyword>
<keyword id="KW-0130">Cell adhesion</keyword>
<keyword id="KW-0998">Cell outer membrane</keyword>
<keyword id="KW-1015">Disulfide bond</keyword>
<keyword id="KW-0472">Membrane</keyword>
<keyword id="KW-1185">Reference proteome</keyword>
<keyword id="KW-0677">Repeat</keyword>
<keyword id="KW-0732">Signal</keyword>
<keyword id="KW-0843">Virulence</keyword>
<feature type="signal peptide" evidence="2">
    <location>
        <begin position="1"/>
        <end position="41"/>
    </location>
</feature>
<feature type="chain" id="PRO_0000211827" description="Intimin" evidence="2">
    <location>
        <begin position="42"/>
        <end position="939"/>
    </location>
</feature>
<feature type="domain" description="LysM" evidence="4">
    <location>
        <begin position="63"/>
        <end position="112"/>
    </location>
</feature>
<feature type="domain" description="Big-1 1" evidence="3">
    <location>
        <begin position="560"/>
        <end position="653"/>
    </location>
</feature>
<feature type="domain" description="Big-1 2" evidence="3">
    <location>
        <begin position="660"/>
        <end position="751"/>
    </location>
</feature>
<feature type="region of interest" description="Required for periplasmic localization" evidence="9">
    <location>
        <begin position="40"/>
        <end position="212"/>
    </location>
</feature>
<feature type="region of interest" description="Peptidoglycan-binding" evidence="9">
    <location>
        <begin position="40"/>
        <end position="153"/>
    </location>
</feature>
<feature type="region of interest" description="Sufficient for homodimerization" evidence="9">
    <location>
        <begin position="40"/>
        <end position="153"/>
    </location>
</feature>
<feature type="region of interest" description="Inverse autotransporter" evidence="17">
    <location>
        <begin position="189"/>
        <end position="430"/>
    </location>
</feature>
<feature type="region of interest" description="Signature sequence for beta-barrel assembly machinery (BAM), which recognizes the unfolded beta-barrel in the periplasm" evidence="1">
    <location>
        <begin position="402"/>
        <end position="411"/>
    </location>
</feature>
<feature type="region of interest" description="Required and sufficient for interaction with intimin receptor Tir" evidence="6">
    <location>
        <begin position="750"/>
        <end position="939"/>
    </location>
</feature>
<feature type="region of interest" description="C-type lectin domain" evidence="17">
    <location>
        <begin position="842"/>
        <end position="939"/>
    </location>
</feature>
<feature type="region of interest" description="Intimin receptor Tir-binding" evidence="7">
    <location>
        <begin position="842"/>
        <end position="939"/>
    </location>
</feature>
<feature type="site" description="Implicated in intimin receptor Tir-binding" evidence="6">
    <location>
        <position position="889"/>
    </location>
</feature>
<feature type="site" description="Implicated in intimin receptor Tir-binding" evidence="6">
    <location>
        <position position="891"/>
    </location>
</feature>
<feature type="site" description="Implicated in intimin receptor Tir-binding" evidence="6">
    <location>
        <position position="896"/>
    </location>
</feature>
<feature type="site" description="Implicated in intimin receptor Tir-binding" evidence="6">
    <location>
        <position position="897"/>
    </location>
</feature>
<feature type="site" description="Implicated in intimin receptor Tir-binding" evidence="6">
    <location>
        <position position="898"/>
    </location>
</feature>
<feature type="site" description="Implicated in intimin receptor Tir-binding" evidence="6">
    <location>
        <position position="899"/>
    </location>
</feature>
<feature type="site" description="Implicated in intimin receptor Tir-binding" evidence="6">
    <location>
        <position position="903"/>
    </location>
</feature>
<feature type="site" description="Implicated in intimin receptor Tir-binding" evidence="6">
    <location>
        <position position="905"/>
    </location>
</feature>
<feature type="site" description="Implicated in intimin receptor Tir-binding" evidence="6">
    <location>
        <position position="906"/>
    </location>
</feature>
<feature type="site" description="Implicated in intimin receptor Tir-binding" evidence="6">
    <location>
        <position position="907"/>
    </location>
</feature>
<feature type="site" description="Implicated in intimin receptor Tir-binding" evidence="6">
    <location>
        <position position="911"/>
    </location>
</feature>
<feature type="site" description="Implicated in intimin receptor Tir-binding" evidence="6">
    <location>
        <position position="912"/>
    </location>
</feature>
<feature type="site" description="Implicated in intimin receptor Tir-binding" evidence="6">
    <location>
        <position position="913"/>
    </location>
</feature>
<feature type="site" description="Implicated in intimin receptor Tir-binding" evidence="6">
    <location>
        <position position="914"/>
    </location>
</feature>
<feature type="site" description="Implicated in intimin receptor Tir-binding" evidence="6">
    <location>
        <position position="919"/>
    </location>
</feature>
<feature type="site" description="Implicated in intimin receptor Tir-binding" evidence="6">
    <location>
        <position position="920"/>
    </location>
</feature>
<feature type="site" description="Implicated in intimin receptor Tir-binding" evidence="6">
    <location>
        <position position="925"/>
    </location>
</feature>
<feature type="site" description="Implicated in intimin receptor Tir-binding" evidence="6">
    <location>
        <position position="926"/>
    </location>
</feature>
<feature type="site" description="Implicated in intimin receptor Tir-binding" evidence="6">
    <location>
        <position position="929"/>
    </location>
</feature>
<feature type="site" description="Implicated in intimin receptor Tir-binding" evidence="6">
    <location>
        <position position="930"/>
    </location>
</feature>
<feature type="site" description="Implicated in intimin receptor Tir-binding" evidence="6">
    <location>
        <position position="932"/>
    </location>
</feature>
<feature type="site" description="Implicated in intimin receptor Tir-binding" evidence="6">
    <location>
        <position position="933"/>
    </location>
</feature>
<feature type="site" description="Implicated in intimin receptor Tir-binding" evidence="6">
    <location>
        <position position="934"/>
    </location>
</feature>
<feature type="site" description="Implicated in intimin receptor Tir-binding" evidence="6">
    <location>
        <position position="936"/>
    </location>
</feature>
<feature type="site" description="Implicated in intimin receptor Tir-binding" evidence="6">
    <location>
        <position position="938"/>
    </location>
</feature>
<feature type="disulfide bond" evidence="5 6 7 18 20">
    <location>
        <begin position="860"/>
        <end position="937"/>
    </location>
</feature>
<feature type="mutagenesis site" description="No effect on intimin expression or association with the bacterial outer membrane. Host cell adherent bacteria are unable to initiate host cytoskeletal rearrangements. Disrupted intimin-intimin receptor Tir interaction, thus preventing bacterium from forming actin pedestals in the host cell." evidence="6">
    <original>W</original>
    <variation>A</variation>
    <location>
        <position position="899"/>
    </location>
</feature>
<feature type="sequence conflict" description="In Ref. 1; AAA62775 and 2; AAC38392." evidence="16" ref="1 2">
    <original>A</original>
    <variation>E</variation>
    <location>
        <position position="105"/>
    </location>
</feature>
<feature type="helix" evidence="27">
    <location>
        <begin position="41"/>
        <end position="43"/>
    </location>
</feature>
<feature type="strand" evidence="27">
    <location>
        <begin position="50"/>
        <end position="52"/>
    </location>
</feature>
<feature type="helix" evidence="27">
    <location>
        <begin position="54"/>
        <end position="61"/>
    </location>
</feature>
<feature type="strand" evidence="27">
    <location>
        <begin position="62"/>
        <end position="66"/>
    </location>
</feature>
<feature type="helix" evidence="27">
    <location>
        <begin position="73"/>
        <end position="80"/>
    </location>
</feature>
<feature type="helix" evidence="27">
    <location>
        <begin position="84"/>
        <end position="91"/>
    </location>
</feature>
<feature type="turn" evidence="27">
    <location>
        <begin position="92"/>
        <end position="94"/>
    </location>
</feature>
<feature type="strand" evidence="27">
    <location>
        <begin position="95"/>
        <end position="97"/>
    </location>
</feature>
<feature type="helix" evidence="27">
    <location>
        <begin position="98"/>
        <end position="102"/>
    </location>
</feature>
<feature type="strand" evidence="27">
    <location>
        <begin position="109"/>
        <end position="113"/>
    </location>
</feature>
<feature type="strand" evidence="27">
    <location>
        <begin position="118"/>
        <end position="121"/>
    </location>
</feature>
<feature type="strand" evidence="27">
    <location>
        <begin position="141"/>
        <end position="143"/>
    </location>
</feature>
<feature type="strand" evidence="29">
    <location>
        <begin position="454"/>
        <end position="457"/>
    </location>
</feature>
<feature type="strand" evidence="29">
    <location>
        <begin position="462"/>
        <end position="465"/>
    </location>
</feature>
<feature type="strand" evidence="29">
    <location>
        <begin position="469"/>
        <end position="472"/>
    </location>
</feature>
<feature type="strand" evidence="29">
    <location>
        <begin position="475"/>
        <end position="480"/>
    </location>
</feature>
<feature type="strand" evidence="29">
    <location>
        <begin position="482"/>
        <end position="488"/>
    </location>
</feature>
<feature type="helix" evidence="29">
    <location>
        <begin position="490"/>
        <end position="493"/>
    </location>
</feature>
<feature type="turn" evidence="29">
    <location>
        <begin position="494"/>
        <end position="496"/>
    </location>
</feature>
<feature type="strand" evidence="29">
    <location>
        <begin position="498"/>
        <end position="501"/>
    </location>
</feature>
<feature type="strand" evidence="29">
    <location>
        <begin position="503"/>
        <end position="505"/>
    </location>
</feature>
<feature type="strand" evidence="29">
    <location>
        <begin position="510"/>
        <end position="513"/>
    </location>
</feature>
<feature type="strand" evidence="29">
    <location>
        <begin position="524"/>
        <end position="533"/>
    </location>
</feature>
<feature type="strand" evidence="29">
    <location>
        <begin position="538"/>
        <end position="549"/>
    </location>
</feature>
<feature type="strand" evidence="29">
    <location>
        <begin position="559"/>
        <end position="566"/>
    </location>
</feature>
<feature type="strand" evidence="29">
    <location>
        <begin position="568"/>
        <end position="574"/>
    </location>
</feature>
<feature type="strand" evidence="29">
    <location>
        <begin position="578"/>
        <end position="586"/>
    </location>
</feature>
<feature type="strand" evidence="29">
    <location>
        <begin position="595"/>
        <end position="604"/>
    </location>
</feature>
<feature type="strand" evidence="29">
    <location>
        <begin position="606"/>
        <end position="608"/>
    </location>
</feature>
<feature type="strand" evidence="29">
    <location>
        <begin position="610"/>
        <end position="613"/>
    </location>
</feature>
<feature type="strand" evidence="29">
    <location>
        <begin position="618"/>
        <end position="625"/>
    </location>
</feature>
<feature type="strand" evidence="29">
    <location>
        <begin position="630"/>
        <end position="637"/>
    </location>
</feature>
<feature type="strand" evidence="29">
    <location>
        <begin position="650"/>
        <end position="653"/>
    </location>
</feature>
<feature type="strand" evidence="28">
    <location>
        <begin position="659"/>
        <end position="666"/>
    </location>
</feature>
<feature type="strand" evidence="28">
    <location>
        <begin position="668"/>
        <end position="674"/>
    </location>
</feature>
<feature type="strand" evidence="28">
    <location>
        <begin position="678"/>
        <end position="686"/>
    </location>
</feature>
<feature type="strand" evidence="28">
    <location>
        <begin position="695"/>
        <end position="706"/>
    </location>
</feature>
<feature type="strand" evidence="28">
    <location>
        <begin position="708"/>
        <end position="711"/>
    </location>
</feature>
<feature type="strand" evidence="28">
    <location>
        <begin position="716"/>
        <end position="723"/>
    </location>
</feature>
<feature type="strand" evidence="28">
    <location>
        <begin position="728"/>
        <end position="730"/>
    </location>
</feature>
<feature type="strand" evidence="28">
    <location>
        <begin position="732"/>
        <end position="735"/>
    </location>
</feature>
<feature type="strand" evidence="28">
    <location>
        <begin position="748"/>
        <end position="751"/>
    </location>
</feature>
<feature type="strand" evidence="25">
    <location>
        <begin position="761"/>
        <end position="763"/>
    </location>
</feature>
<feature type="turn" evidence="25">
    <location>
        <begin position="764"/>
        <end position="766"/>
    </location>
</feature>
<feature type="strand" evidence="25">
    <location>
        <begin position="769"/>
        <end position="771"/>
    </location>
</feature>
<feature type="strand" evidence="25">
    <location>
        <begin position="774"/>
        <end position="777"/>
    </location>
</feature>
<feature type="strand" evidence="25">
    <location>
        <begin position="781"/>
        <end position="783"/>
    </location>
</feature>
<feature type="strand" evidence="25">
    <location>
        <begin position="786"/>
        <end position="788"/>
    </location>
</feature>
<feature type="strand" evidence="24">
    <location>
        <begin position="790"/>
        <end position="792"/>
    </location>
</feature>
<feature type="strand" evidence="25">
    <location>
        <begin position="793"/>
        <end position="798"/>
    </location>
</feature>
<feature type="turn" evidence="25">
    <location>
        <begin position="800"/>
        <end position="802"/>
    </location>
</feature>
<feature type="strand" evidence="25">
    <location>
        <begin position="803"/>
        <end position="805"/>
    </location>
</feature>
<feature type="turn" evidence="25">
    <location>
        <begin position="807"/>
        <end position="809"/>
    </location>
</feature>
<feature type="strand" evidence="25">
    <location>
        <begin position="811"/>
        <end position="814"/>
    </location>
</feature>
<feature type="strand" evidence="25">
    <location>
        <begin position="816"/>
        <end position="818"/>
    </location>
</feature>
<feature type="strand" evidence="25">
    <location>
        <begin position="820"/>
        <end position="826"/>
    </location>
</feature>
<feature type="turn" evidence="25">
    <location>
        <begin position="827"/>
        <end position="829"/>
    </location>
</feature>
<feature type="strand" evidence="25">
    <location>
        <begin position="830"/>
        <end position="836"/>
    </location>
</feature>
<feature type="strand" evidence="25">
    <location>
        <begin position="840"/>
        <end position="851"/>
    </location>
</feature>
<feature type="helix" evidence="25">
    <location>
        <begin position="853"/>
        <end position="862"/>
    </location>
</feature>
<feature type="strand" evidence="26">
    <location>
        <begin position="864"/>
        <end position="866"/>
    </location>
</feature>
<feature type="helix" evidence="25">
    <location>
        <begin position="871"/>
        <end position="881"/>
    </location>
</feature>
<feature type="helix" evidence="25">
    <location>
        <begin position="884"/>
        <end position="886"/>
    </location>
</feature>
<feature type="helix" evidence="25">
    <location>
        <begin position="888"/>
        <end position="890"/>
    </location>
</feature>
<feature type="strand" evidence="25">
    <location>
        <begin position="897"/>
        <end position="899"/>
    </location>
</feature>
<feature type="helix" evidence="25">
    <location>
        <begin position="904"/>
        <end position="909"/>
    </location>
</feature>
<feature type="strand" evidence="25">
    <location>
        <begin position="911"/>
        <end position="916"/>
    </location>
</feature>
<feature type="turn" evidence="25">
    <location>
        <begin position="917"/>
        <end position="919"/>
    </location>
</feature>
<feature type="strand" evidence="25">
    <location>
        <begin position="920"/>
        <end position="927"/>
    </location>
</feature>
<feature type="strand" evidence="24">
    <location>
        <begin position="928"/>
        <end position="930"/>
    </location>
</feature>
<feature type="strand" evidence="25">
    <location>
        <begin position="933"/>
        <end position="938"/>
    </location>
</feature>
<proteinExistence type="evidence at protein level"/>
<protein>
    <recommendedName>
        <fullName evidence="10 11 12 14 15">Intimin</fullName>
    </recommendedName>
    <alternativeName>
        <fullName evidence="13">Attaching and effacing protein</fullName>
        <shortName evidence="13">Eae protein</shortName>
    </alternativeName>
</protein>
<comment type="function">
    <text evidence="6 8 9 16 17">An inverse autotransporter (PubMed:25353290, PubMed:33277518). Adhesin, which mediates attachment to the human intestine epithelial cells (PubMed:2172966). Necessary for the production of attaching and effacing lesions on infected human tissue culture cells (PubMed:2172966, PubMed:10835344). Anchored to the outer membrane by binding to peptidoglycan (PGN) via its periplasmic domain, thus helping in receptor interactions during host invasion (Probable). PGN-binding may also aid in resisting mechanical and chemical stress during transit of the bacterium through the gastrointestinal tract of the host (Probable). Periplasmic domain binds purified E.coli PGN sacculi under acidic conditions in vitro and in vivo, but does not bind to chitin (PubMed:25353290). Periplasmic domain binds PGN sacculi with an apparent dissociation constant (Kd) of 0.8 uM (PubMed:25353290). No binding to PGN in vitro at normal physiological pH 7.4 (PubMed:25353290).</text>
</comment>
<comment type="subunit">
    <text evidence="6 7 9">Homodimer (PubMed:25353290). Interacts with Tir (PubMed:10835344, PubMed:10890451).</text>
</comment>
<comment type="subcellular location">
    <subcellularLocation>
        <location evidence="6 8 17">Cell outer membrane</location>
    </subcellularLocation>
    <text evidence="17">The passenger domain is exposed on the bacterial cell surface.</text>
</comment>
<comment type="domain">
    <text evidence="17">Has a signal sequence, a periplasmic Lys M domain, an inverse autotransporter domain (residues 189-430) predicted to form an outer membrane-embedded 12-stranded beta-barrel, followed by an extracellular passenger domain (residues 450-939) with 4 Big domains (residues 450-550, 559-653, 658-751 and 755-842) and a C-type lectin domain (residues 842-939). Beta-barrel forms a hydrophilic pore for the translocation of the passenger domain to the bacterial cell surface. Big1 domain (D00) (residues 450-550) of the passenger is at the juncture of the outer membrane and extracellular medium connecting to the extracellular Big2 domain (D0) (residues 559-653). Together D00 and D0 domains adopt a rigid extended conformation positioning the bacterial Tir receptor-binding region further away from the surface of the outer membrane, thus increasing the radius of probable interaction between the passenger and the Tir receptor located on the host cell plasma membrane.</text>
</comment>
<comment type="miscellaneous">
    <text evidence="16">'Inverse' autotransporters have an N-terminal translocation domain followed by the passenger domain, as opposed to 'classical' autotransporters which have N-terminal passenger and C-terminal translocation domains.</text>
</comment>
<comment type="similarity">
    <text evidence="16">Belongs to the intimin/invasin family.</text>
</comment>
<gene>
    <name evidence="13" type="primary">eae</name>
    <name type="synonym">eaeA</name>
    <name type="ordered locus">E2348C_3939</name>
</gene>
<sequence length="939" mass="102353">MITHGFYARTRHKHKLKKTFIMLSAGLGLFFYVNQNSFANGENYFKLGSDSKLLTHNSYQNRLFYTLKTGETVADLSKSQDINLSTIWSLNKHLYSSESEMMKAAPGQQIILPLKKLPFEYSALPLLGSAPLVAAGGVAGHTNKLTKMSPDVTKSNMTDDKALNYAAQQAASLGSQLQSRSLNGDYAKDTALGIAGNQASSQLQAWLQHYGTAEVNLQSGNNFDGSSLDFLLPFYDSEKMLAFGQVGARYIDSRFTANLGAGQRFFLPENMLGYNVFIDQDFSGDNTRLGIGGEYWRDYFKSSVNGYFRMSGWHESYNKKDYDERPANGFDIRFNGYLPSYPALGAKLMYEQYYGDNVALFNSDKLQSNPGAATVGVNYTPIPLVTMGIDYRHGTGNENDLLYSMQFRYQFDKPWSQQIEPQYVNELRTLSGSRYDLVQRNNNIILEYKKQDILSLNIPHDINGTERSTQKIQLIVKSKYGLDRIVWDDSALRSQGGQIQHSGSQSAQDYQAILPAYVQGGSNVYKVTARAYDRNGNSSNNVLLTITVLSNGQVVDQVGVTDFTADKTSAKADGTEAITYTATVKKNGVAQANVPVSFNIVSGTAVLSANSANTNGSGKATVTLKSDKPGQVVVSAKTAEMTSALNANAVIFVDQTKASITEIKADKTTAVANGQDAITYTVKVMKGDKPVSNQEVTFTTTLGKLSNSTEKTDTNGYAKVTLTSTTPGKSLVSARVSDVAVDVKAPEVEFFTTLTIDDGNIEIVGTGVKGKLPTVWLQYGQVNLKASGGNGKYTWRSANPAIASVDASSGQVTLKEKGTTTISVISSDNQTATYTIATPNSLIVPNMSKRVTYNDAVNTCKNFGGKLPSSQNELENVFKAWGAANKYEYYKSSQTIISWVQQTAQDAKSGVASTYDLVKQNPLNNIKASESNAYATCVK</sequence>